<reference key="1">
    <citation type="journal article" date="2002" name="Nature">
        <title>The genome sequence of Schizosaccharomyces pombe.</title>
        <authorList>
            <person name="Wood V."/>
            <person name="Gwilliam R."/>
            <person name="Rajandream M.A."/>
            <person name="Lyne M.H."/>
            <person name="Lyne R."/>
            <person name="Stewart A."/>
            <person name="Sgouros J.G."/>
            <person name="Peat N."/>
            <person name="Hayles J."/>
            <person name="Baker S.G."/>
            <person name="Basham D."/>
            <person name="Bowman S."/>
            <person name="Brooks K."/>
            <person name="Brown D."/>
            <person name="Brown S."/>
            <person name="Chillingworth T."/>
            <person name="Churcher C.M."/>
            <person name="Collins M."/>
            <person name="Connor R."/>
            <person name="Cronin A."/>
            <person name="Davis P."/>
            <person name="Feltwell T."/>
            <person name="Fraser A."/>
            <person name="Gentles S."/>
            <person name="Goble A."/>
            <person name="Hamlin N."/>
            <person name="Harris D.E."/>
            <person name="Hidalgo J."/>
            <person name="Hodgson G."/>
            <person name="Holroyd S."/>
            <person name="Hornsby T."/>
            <person name="Howarth S."/>
            <person name="Huckle E.J."/>
            <person name="Hunt S."/>
            <person name="Jagels K."/>
            <person name="James K.D."/>
            <person name="Jones L."/>
            <person name="Jones M."/>
            <person name="Leather S."/>
            <person name="McDonald S."/>
            <person name="McLean J."/>
            <person name="Mooney P."/>
            <person name="Moule S."/>
            <person name="Mungall K.L."/>
            <person name="Murphy L.D."/>
            <person name="Niblett D."/>
            <person name="Odell C."/>
            <person name="Oliver K."/>
            <person name="O'Neil S."/>
            <person name="Pearson D."/>
            <person name="Quail M.A."/>
            <person name="Rabbinowitsch E."/>
            <person name="Rutherford K.M."/>
            <person name="Rutter S."/>
            <person name="Saunders D."/>
            <person name="Seeger K."/>
            <person name="Sharp S."/>
            <person name="Skelton J."/>
            <person name="Simmonds M.N."/>
            <person name="Squares R."/>
            <person name="Squares S."/>
            <person name="Stevens K."/>
            <person name="Taylor K."/>
            <person name="Taylor R.G."/>
            <person name="Tivey A."/>
            <person name="Walsh S.V."/>
            <person name="Warren T."/>
            <person name="Whitehead S."/>
            <person name="Woodward J.R."/>
            <person name="Volckaert G."/>
            <person name="Aert R."/>
            <person name="Robben J."/>
            <person name="Grymonprez B."/>
            <person name="Weltjens I."/>
            <person name="Vanstreels E."/>
            <person name="Rieger M."/>
            <person name="Schaefer M."/>
            <person name="Mueller-Auer S."/>
            <person name="Gabel C."/>
            <person name="Fuchs M."/>
            <person name="Duesterhoeft A."/>
            <person name="Fritzc C."/>
            <person name="Holzer E."/>
            <person name="Moestl D."/>
            <person name="Hilbert H."/>
            <person name="Borzym K."/>
            <person name="Langer I."/>
            <person name="Beck A."/>
            <person name="Lehrach H."/>
            <person name="Reinhardt R."/>
            <person name="Pohl T.M."/>
            <person name="Eger P."/>
            <person name="Zimmermann W."/>
            <person name="Wedler H."/>
            <person name="Wambutt R."/>
            <person name="Purnelle B."/>
            <person name="Goffeau A."/>
            <person name="Cadieu E."/>
            <person name="Dreano S."/>
            <person name="Gloux S."/>
            <person name="Lelaure V."/>
            <person name="Mottier S."/>
            <person name="Galibert F."/>
            <person name="Aves S.J."/>
            <person name="Xiang Z."/>
            <person name="Hunt C."/>
            <person name="Moore K."/>
            <person name="Hurst S.M."/>
            <person name="Lucas M."/>
            <person name="Rochet M."/>
            <person name="Gaillardin C."/>
            <person name="Tallada V.A."/>
            <person name="Garzon A."/>
            <person name="Thode G."/>
            <person name="Daga R.R."/>
            <person name="Cruzado L."/>
            <person name="Jimenez J."/>
            <person name="Sanchez M."/>
            <person name="del Rey F."/>
            <person name="Benito J."/>
            <person name="Dominguez A."/>
            <person name="Revuelta J.L."/>
            <person name="Moreno S."/>
            <person name="Armstrong J."/>
            <person name="Forsburg S.L."/>
            <person name="Cerutti L."/>
            <person name="Lowe T."/>
            <person name="McCombie W.R."/>
            <person name="Paulsen I."/>
            <person name="Potashkin J."/>
            <person name="Shpakovski G.V."/>
            <person name="Ussery D."/>
            <person name="Barrell B.G."/>
            <person name="Nurse P."/>
        </authorList>
    </citation>
    <scope>NUCLEOTIDE SEQUENCE [LARGE SCALE GENOMIC DNA]</scope>
    <source>
        <strain>972 / ATCC 24843</strain>
    </source>
</reference>
<accession>Q09861</accession>
<sequence length="116" mass="13841">MEYYIRETLITDFQDVKTLKNKRKCFSFFFELRLFSPQCLFIVYFFYLLHVRINTSPLFIKTTTRPTALIHITKYSEALASRLLKGHMTQLSLRTILPPAHTKNLHRQQPTTWLDS</sequence>
<protein>
    <recommendedName>
        <fullName>Uncharacterized protein C29E6.07</fullName>
    </recommendedName>
</protein>
<keyword id="KW-1185">Reference proteome</keyword>
<proteinExistence type="predicted"/>
<organism>
    <name type="scientific">Schizosaccharomyces pombe (strain 972 / ATCC 24843)</name>
    <name type="common">Fission yeast</name>
    <dbReference type="NCBI Taxonomy" id="284812"/>
    <lineage>
        <taxon>Eukaryota</taxon>
        <taxon>Fungi</taxon>
        <taxon>Dikarya</taxon>
        <taxon>Ascomycota</taxon>
        <taxon>Taphrinomycotina</taxon>
        <taxon>Schizosaccharomycetes</taxon>
        <taxon>Schizosaccharomycetales</taxon>
        <taxon>Schizosaccharomycetaceae</taxon>
        <taxon>Schizosaccharomyces</taxon>
    </lineage>
</organism>
<name>YAF7_SCHPO</name>
<gene>
    <name type="ORF">SPAC29E6.07</name>
    <name type="ORF">SPAC30.11</name>
</gene>
<feature type="chain" id="PRO_0000116423" description="Uncharacterized protein C29E6.07">
    <location>
        <begin position="1"/>
        <end position="116"/>
    </location>
</feature>
<dbReference type="EMBL" id="Z66525">
    <property type="protein sequence ID" value="CAA91429.1"/>
    <property type="molecule type" value="Genomic_DNA"/>
</dbReference>
<dbReference type="EMBL" id="CU329670">
    <property type="protein sequence ID" value="CAB66470.1"/>
    <property type="molecule type" value="Genomic_DNA"/>
</dbReference>
<dbReference type="PIR" id="S62513">
    <property type="entry name" value="S62513"/>
</dbReference>
<dbReference type="RefSeq" id="NP_594565.1">
    <property type="nucleotide sequence ID" value="NM_001019994.1"/>
</dbReference>
<dbReference type="BioGRID" id="278188">
    <property type="interactions" value="4"/>
</dbReference>
<dbReference type="PaxDb" id="4896-SPAC29E6.07.1"/>
<dbReference type="EnsemblFungi" id="SPAC29E6.07.1">
    <property type="protein sequence ID" value="SPAC29E6.07.1:pep"/>
    <property type="gene ID" value="SPAC29E6.07"/>
</dbReference>
<dbReference type="KEGG" id="spo:2541692"/>
<dbReference type="PomBase" id="SPAC29E6.07"/>
<dbReference type="VEuPathDB" id="FungiDB:SPAC29E6.07"/>
<dbReference type="HOGENOM" id="CLU_2098242_0_0_1"/>
<dbReference type="InParanoid" id="Q09861"/>
<dbReference type="PRO" id="PR:Q09861"/>
<dbReference type="Proteomes" id="UP000002485">
    <property type="component" value="Chromosome I"/>
</dbReference>
<dbReference type="GO" id="GO:0005739">
    <property type="term" value="C:mitochondrion"/>
    <property type="evidence" value="ECO:0007005"/>
    <property type="project" value="PomBase"/>
</dbReference>